<protein>
    <recommendedName>
        <fullName evidence="1">Shikimate kinase</fullName>
        <shortName evidence="1">SK</shortName>
        <ecNumber evidence="1">2.7.1.71</ecNumber>
    </recommendedName>
</protein>
<feature type="chain" id="PRO_1000022985" description="Shikimate kinase">
    <location>
        <begin position="1"/>
        <end position="172"/>
    </location>
</feature>
<feature type="binding site" evidence="1">
    <location>
        <begin position="11"/>
        <end position="16"/>
    </location>
    <ligand>
        <name>ATP</name>
        <dbReference type="ChEBI" id="CHEBI:30616"/>
    </ligand>
</feature>
<feature type="binding site" evidence="1">
    <location>
        <position position="15"/>
    </location>
    <ligand>
        <name>Mg(2+)</name>
        <dbReference type="ChEBI" id="CHEBI:18420"/>
    </ligand>
</feature>
<feature type="binding site" evidence="1">
    <location>
        <position position="33"/>
    </location>
    <ligand>
        <name>substrate</name>
    </ligand>
</feature>
<feature type="binding site" evidence="1">
    <location>
        <position position="57"/>
    </location>
    <ligand>
        <name>substrate</name>
    </ligand>
</feature>
<feature type="binding site" evidence="1">
    <location>
        <position position="79"/>
    </location>
    <ligand>
        <name>substrate</name>
    </ligand>
</feature>
<feature type="binding site" evidence="1">
    <location>
        <position position="117"/>
    </location>
    <ligand>
        <name>ATP</name>
        <dbReference type="ChEBI" id="CHEBI:30616"/>
    </ligand>
</feature>
<feature type="binding site" evidence="1">
    <location>
        <position position="136"/>
    </location>
    <ligand>
        <name>substrate</name>
    </ligand>
</feature>
<feature type="binding site" evidence="1">
    <location>
        <position position="153"/>
    </location>
    <ligand>
        <name>ATP</name>
        <dbReference type="ChEBI" id="CHEBI:30616"/>
    </ligand>
</feature>
<keyword id="KW-0028">Amino-acid biosynthesis</keyword>
<keyword id="KW-0057">Aromatic amino acid biosynthesis</keyword>
<keyword id="KW-0067">ATP-binding</keyword>
<keyword id="KW-0963">Cytoplasm</keyword>
<keyword id="KW-0418">Kinase</keyword>
<keyword id="KW-0460">Magnesium</keyword>
<keyword id="KW-0479">Metal-binding</keyword>
<keyword id="KW-0547">Nucleotide-binding</keyword>
<keyword id="KW-0808">Transferase</keyword>
<accession>A6VDG0</accession>
<sequence length="172" mass="19283">MVNLILVGPMGAGKSTIGRLLAKELHLAFKDSDKEIEQRCGANIPWIFDVEGEAGFREREQAMLSELCATDGMVIATGGGAVMRDGNRQILRAGGRVVYLHASVEHQIARTARDRNRPLLQKPNPGQILRDLMDLRDPLYREIADVVVETDERPPRLVVQEILERLRKLPPR</sequence>
<name>AROK_PSEP7</name>
<proteinExistence type="inferred from homology"/>
<comment type="function">
    <text evidence="1">Catalyzes the specific phosphorylation of the 3-hydroxyl group of shikimic acid using ATP as a cosubstrate.</text>
</comment>
<comment type="catalytic activity">
    <reaction evidence="1">
        <text>shikimate + ATP = 3-phosphoshikimate + ADP + H(+)</text>
        <dbReference type="Rhea" id="RHEA:13121"/>
        <dbReference type="ChEBI" id="CHEBI:15378"/>
        <dbReference type="ChEBI" id="CHEBI:30616"/>
        <dbReference type="ChEBI" id="CHEBI:36208"/>
        <dbReference type="ChEBI" id="CHEBI:145989"/>
        <dbReference type="ChEBI" id="CHEBI:456216"/>
        <dbReference type="EC" id="2.7.1.71"/>
    </reaction>
</comment>
<comment type="cofactor">
    <cofactor evidence="1">
        <name>Mg(2+)</name>
        <dbReference type="ChEBI" id="CHEBI:18420"/>
    </cofactor>
    <text evidence="1">Binds 1 Mg(2+) ion per subunit.</text>
</comment>
<comment type="pathway">
    <text evidence="1">Metabolic intermediate biosynthesis; chorismate biosynthesis; chorismate from D-erythrose 4-phosphate and phosphoenolpyruvate: step 5/7.</text>
</comment>
<comment type="subunit">
    <text evidence="1">Monomer.</text>
</comment>
<comment type="subcellular location">
    <subcellularLocation>
        <location evidence="1">Cytoplasm</location>
    </subcellularLocation>
</comment>
<comment type="similarity">
    <text evidence="1">Belongs to the shikimate kinase family.</text>
</comment>
<evidence type="ECO:0000255" key="1">
    <source>
        <dbReference type="HAMAP-Rule" id="MF_00109"/>
    </source>
</evidence>
<organism>
    <name type="scientific">Pseudomonas paraeruginosa (strain DSM 24068 / PA7)</name>
    <name type="common">Pseudomonas aeruginosa (strain PA7)</name>
    <dbReference type="NCBI Taxonomy" id="381754"/>
    <lineage>
        <taxon>Bacteria</taxon>
        <taxon>Pseudomonadati</taxon>
        <taxon>Pseudomonadota</taxon>
        <taxon>Gammaproteobacteria</taxon>
        <taxon>Pseudomonadales</taxon>
        <taxon>Pseudomonadaceae</taxon>
        <taxon>Pseudomonas</taxon>
        <taxon>Pseudomonas paraeruginosa</taxon>
    </lineage>
</organism>
<reference key="1">
    <citation type="submission" date="2007-06" db="EMBL/GenBank/DDBJ databases">
        <authorList>
            <person name="Dodson R.J."/>
            <person name="Harkins D."/>
            <person name="Paulsen I.T."/>
        </authorList>
    </citation>
    <scope>NUCLEOTIDE SEQUENCE [LARGE SCALE GENOMIC DNA]</scope>
    <source>
        <strain>DSM 24068 / PA7</strain>
    </source>
</reference>
<dbReference type="EC" id="2.7.1.71" evidence="1"/>
<dbReference type="EMBL" id="CP000744">
    <property type="protein sequence ID" value="ABR85013.1"/>
    <property type="molecule type" value="Genomic_DNA"/>
</dbReference>
<dbReference type="RefSeq" id="WP_003148769.1">
    <property type="nucleotide sequence ID" value="NC_009656.1"/>
</dbReference>
<dbReference type="SMR" id="A6VDG0"/>
<dbReference type="GeneID" id="77223576"/>
<dbReference type="KEGG" id="pap:PSPA7_5776"/>
<dbReference type="HOGENOM" id="CLU_057607_2_2_6"/>
<dbReference type="UniPathway" id="UPA00053">
    <property type="reaction ID" value="UER00088"/>
</dbReference>
<dbReference type="Proteomes" id="UP000001582">
    <property type="component" value="Chromosome"/>
</dbReference>
<dbReference type="GO" id="GO:0005829">
    <property type="term" value="C:cytosol"/>
    <property type="evidence" value="ECO:0007669"/>
    <property type="project" value="TreeGrafter"/>
</dbReference>
<dbReference type="GO" id="GO:0005524">
    <property type="term" value="F:ATP binding"/>
    <property type="evidence" value="ECO:0007669"/>
    <property type="project" value="UniProtKB-UniRule"/>
</dbReference>
<dbReference type="GO" id="GO:0000287">
    <property type="term" value="F:magnesium ion binding"/>
    <property type="evidence" value="ECO:0007669"/>
    <property type="project" value="UniProtKB-UniRule"/>
</dbReference>
<dbReference type="GO" id="GO:0004765">
    <property type="term" value="F:shikimate kinase activity"/>
    <property type="evidence" value="ECO:0007669"/>
    <property type="project" value="UniProtKB-UniRule"/>
</dbReference>
<dbReference type="GO" id="GO:0008652">
    <property type="term" value="P:amino acid biosynthetic process"/>
    <property type="evidence" value="ECO:0007669"/>
    <property type="project" value="UniProtKB-KW"/>
</dbReference>
<dbReference type="GO" id="GO:0009073">
    <property type="term" value="P:aromatic amino acid family biosynthetic process"/>
    <property type="evidence" value="ECO:0007669"/>
    <property type="project" value="UniProtKB-KW"/>
</dbReference>
<dbReference type="GO" id="GO:0009423">
    <property type="term" value="P:chorismate biosynthetic process"/>
    <property type="evidence" value="ECO:0007669"/>
    <property type="project" value="UniProtKB-UniRule"/>
</dbReference>
<dbReference type="CDD" id="cd00464">
    <property type="entry name" value="SK"/>
    <property type="match status" value="1"/>
</dbReference>
<dbReference type="Gene3D" id="3.40.50.300">
    <property type="entry name" value="P-loop containing nucleotide triphosphate hydrolases"/>
    <property type="match status" value="1"/>
</dbReference>
<dbReference type="HAMAP" id="MF_00109">
    <property type="entry name" value="Shikimate_kinase"/>
    <property type="match status" value="1"/>
</dbReference>
<dbReference type="InterPro" id="IPR027417">
    <property type="entry name" value="P-loop_NTPase"/>
</dbReference>
<dbReference type="InterPro" id="IPR031322">
    <property type="entry name" value="Shikimate/glucono_kinase"/>
</dbReference>
<dbReference type="InterPro" id="IPR000623">
    <property type="entry name" value="Shikimate_kinase/TSH1"/>
</dbReference>
<dbReference type="InterPro" id="IPR023000">
    <property type="entry name" value="Shikimate_kinase_CS"/>
</dbReference>
<dbReference type="NCBIfam" id="NF003456">
    <property type="entry name" value="PRK05057.1"/>
    <property type="match status" value="1"/>
</dbReference>
<dbReference type="PANTHER" id="PTHR21087">
    <property type="entry name" value="SHIKIMATE KINASE"/>
    <property type="match status" value="1"/>
</dbReference>
<dbReference type="PANTHER" id="PTHR21087:SF16">
    <property type="entry name" value="SHIKIMATE KINASE 1, CHLOROPLASTIC"/>
    <property type="match status" value="1"/>
</dbReference>
<dbReference type="Pfam" id="PF01202">
    <property type="entry name" value="SKI"/>
    <property type="match status" value="1"/>
</dbReference>
<dbReference type="PRINTS" id="PR01100">
    <property type="entry name" value="SHIKIMTKNASE"/>
</dbReference>
<dbReference type="SUPFAM" id="SSF52540">
    <property type="entry name" value="P-loop containing nucleoside triphosphate hydrolases"/>
    <property type="match status" value="1"/>
</dbReference>
<dbReference type="PROSITE" id="PS01128">
    <property type="entry name" value="SHIKIMATE_KINASE"/>
    <property type="match status" value="1"/>
</dbReference>
<gene>
    <name evidence="1" type="primary">aroK</name>
    <name type="ordered locus">PSPA7_5776</name>
</gene>